<accession>B1Z7C5</accession>
<name>CYSI_METPB</name>
<protein>
    <recommendedName>
        <fullName evidence="1">Sulfite reductase [NADPH] hemoprotein beta-component</fullName>
        <shortName evidence="1">SiR-HP</shortName>
        <shortName evidence="1">SiRHP</shortName>
        <ecNumber evidence="1">1.8.1.2</ecNumber>
    </recommendedName>
</protein>
<gene>
    <name evidence="1" type="primary">cysI</name>
    <name type="ordered locus">Mpop_2195</name>
</gene>
<keyword id="KW-0004">4Fe-4S</keyword>
<keyword id="KW-0028">Amino-acid biosynthesis</keyword>
<keyword id="KW-0198">Cysteine biosynthesis</keyword>
<keyword id="KW-0349">Heme</keyword>
<keyword id="KW-0408">Iron</keyword>
<keyword id="KW-0411">Iron-sulfur</keyword>
<keyword id="KW-0479">Metal-binding</keyword>
<keyword id="KW-0521">NADP</keyword>
<keyword id="KW-0560">Oxidoreductase</keyword>
<feature type="chain" id="PRO_0000388497" description="Sulfite reductase [NADPH] hemoprotein beta-component">
    <location>
        <begin position="1"/>
        <end position="612"/>
    </location>
</feature>
<feature type="region of interest" description="Disordered" evidence="2">
    <location>
        <begin position="1"/>
        <end position="32"/>
    </location>
</feature>
<feature type="binding site" evidence="1">
    <location>
        <position position="469"/>
    </location>
    <ligand>
        <name>[4Fe-4S] cluster</name>
        <dbReference type="ChEBI" id="CHEBI:49883"/>
    </ligand>
</feature>
<feature type="binding site" evidence="1">
    <location>
        <position position="475"/>
    </location>
    <ligand>
        <name>[4Fe-4S] cluster</name>
        <dbReference type="ChEBI" id="CHEBI:49883"/>
    </ligand>
</feature>
<feature type="binding site" evidence="1">
    <location>
        <position position="514"/>
    </location>
    <ligand>
        <name>[4Fe-4S] cluster</name>
        <dbReference type="ChEBI" id="CHEBI:49883"/>
    </ligand>
</feature>
<feature type="binding site" evidence="1">
    <location>
        <position position="518"/>
    </location>
    <ligand>
        <name>[4Fe-4S] cluster</name>
        <dbReference type="ChEBI" id="CHEBI:49883"/>
    </ligand>
</feature>
<feature type="binding site" description="axial binding residue" evidence="1">
    <location>
        <position position="518"/>
    </location>
    <ligand>
        <name>siroheme</name>
        <dbReference type="ChEBI" id="CHEBI:60052"/>
    </ligand>
    <ligandPart>
        <name>Fe</name>
        <dbReference type="ChEBI" id="CHEBI:18248"/>
    </ligandPart>
</feature>
<proteinExistence type="inferred from homology"/>
<sequence length="612" mass="67107">MDDHKPIDTPDGPAVDTPGIGAHRYEAPPTDRPITEAEAARAAGLAHNEHLKIASRYLRGGLADGLLKHATGAISEDDGQLVKFHGMYMQDDRDIRAERTKKKLEKAFSFMIRLRIAGGVVTPKQWLILDNIATTYAGNALRATTRQTFQYHGVIKSNLKRTMAAIDSALLDTIAACGDVNRNVMAATNPAQAGAHKAALQLAKDISDTLLPKTGAWREIWLDGERVVGGEDEAEVEPVYGKTYLPRKFKTVVAVPPSNEVDIFAHDLGFIAILDKKNRVTGWNVTVGGGMGMTHGETDTFPRTADVLGFVKPEDALKAAEAVMTVQRDWGNRKNRKNARLKYTIERFGLDAFRAEVEKRIGKKLEAPKPFTFENNGDRYGWVEGEDGRHHLTLYVPSGRIKDIDGGPQFLSGLRRIAEVHEGDFRLTGNQNVIIANVPAAKRAEIDALVDEYGLTRGASAIRRNSIACVALPTCGLALAESERYLPDLLTELEESLARHGLQDEPITIRSTGCPNGCARPFISEIGLVGRGPERYHLYLGAAFDGSRLSKLYREDVLASEIKDTLDPLFAAYAKDRQPGEHFGDFVIRAGFVAKTSNGPDFHERTGPLRAA</sequence>
<dbReference type="EC" id="1.8.1.2" evidence="1"/>
<dbReference type="EMBL" id="CP001029">
    <property type="protein sequence ID" value="ACB80357.1"/>
    <property type="molecule type" value="Genomic_DNA"/>
</dbReference>
<dbReference type="RefSeq" id="WP_012454091.1">
    <property type="nucleotide sequence ID" value="NC_010725.1"/>
</dbReference>
<dbReference type="SMR" id="B1Z7C5"/>
<dbReference type="STRING" id="441620.Mpop_2195"/>
<dbReference type="KEGG" id="mpo:Mpop_2195"/>
<dbReference type="eggNOG" id="COG0155">
    <property type="taxonomic scope" value="Bacteria"/>
</dbReference>
<dbReference type="HOGENOM" id="CLU_001975_3_2_5"/>
<dbReference type="OrthoDB" id="9803707at2"/>
<dbReference type="UniPathway" id="UPA00140">
    <property type="reaction ID" value="UER00207"/>
</dbReference>
<dbReference type="Proteomes" id="UP000007136">
    <property type="component" value="Chromosome"/>
</dbReference>
<dbReference type="GO" id="GO:0009337">
    <property type="term" value="C:sulfite reductase complex (NADPH)"/>
    <property type="evidence" value="ECO:0007669"/>
    <property type="project" value="InterPro"/>
</dbReference>
<dbReference type="GO" id="GO:0051539">
    <property type="term" value="F:4 iron, 4 sulfur cluster binding"/>
    <property type="evidence" value="ECO:0007669"/>
    <property type="project" value="UniProtKB-KW"/>
</dbReference>
<dbReference type="GO" id="GO:0020037">
    <property type="term" value="F:heme binding"/>
    <property type="evidence" value="ECO:0007669"/>
    <property type="project" value="InterPro"/>
</dbReference>
<dbReference type="GO" id="GO:0046872">
    <property type="term" value="F:metal ion binding"/>
    <property type="evidence" value="ECO:0007669"/>
    <property type="project" value="UniProtKB-KW"/>
</dbReference>
<dbReference type="GO" id="GO:0050661">
    <property type="term" value="F:NADP binding"/>
    <property type="evidence" value="ECO:0007669"/>
    <property type="project" value="InterPro"/>
</dbReference>
<dbReference type="GO" id="GO:0050311">
    <property type="term" value="F:sulfite reductase (ferredoxin) activity"/>
    <property type="evidence" value="ECO:0007669"/>
    <property type="project" value="TreeGrafter"/>
</dbReference>
<dbReference type="GO" id="GO:0004783">
    <property type="term" value="F:sulfite reductase (NADPH) activity"/>
    <property type="evidence" value="ECO:0007669"/>
    <property type="project" value="UniProtKB-UniRule"/>
</dbReference>
<dbReference type="GO" id="GO:0019344">
    <property type="term" value="P:cysteine biosynthetic process"/>
    <property type="evidence" value="ECO:0007669"/>
    <property type="project" value="UniProtKB-KW"/>
</dbReference>
<dbReference type="GO" id="GO:0070814">
    <property type="term" value="P:hydrogen sulfide biosynthetic process"/>
    <property type="evidence" value="ECO:0007669"/>
    <property type="project" value="UniProtKB-UniRule"/>
</dbReference>
<dbReference type="GO" id="GO:0000103">
    <property type="term" value="P:sulfate assimilation"/>
    <property type="evidence" value="ECO:0007669"/>
    <property type="project" value="UniProtKB-UniRule"/>
</dbReference>
<dbReference type="FunFam" id="3.30.413.10:FF:000003">
    <property type="entry name" value="Sulfite reductase [NADPH] hemoprotein beta-component"/>
    <property type="match status" value="1"/>
</dbReference>
<dbReference type="FunFam" id="3.30.413.10:FF:000004">
    <property type="entry name" value="Sulfite reductase [NADPH] hemoprotein beta-component"/>
    <property type="match status" value="1"/>
</dbReference>
<dbReference type="Gene3D" id="3.30.413.10">
    <property type="entry name" value="Sulfite Reductase Hemoprotein, domain 1"/>
    <property type="match status" value="2"/>
</dbReference>
<dbReference type="HAMAP" id="MF_01540">
    <property type="entry name" value="CysI"/>
    <property type="match status" value="1"/>
</dbReference>
<dbReference type="InterPro" id="IPR011786">
    <property type="entry name" value="CysI"/>
</dbReference>
<dbReference type="InterPro" id="IPR005117">
    <property type="entry name" value="NiRdtase/SiRdtase_haem-b_fer"/>
</dbReference>
<dbReference type="InterPro" id="IPR036136">
    <property type="entry name" value="Nit/Sulf_reduc_fer-like_dom_sf"/>
</dbReference>
<dbReference type="InterPro" id="IPR006067">
    <property type="entry name" value="NO2/SO3_Rdtase_4Fe4S_dom"/>
</dbReference>
<dbReference type="InterPro" id="IPR045169">
    <property type="entry name" value="NO2/SO3_Rdtase_4Fe4S_prot"/>
</dbReference>
<dbReference type="InterPro" id="IPR045854">
    <property type="entry name" value="NO2/SO3_Rdtase_4Fe4S_sf"/>
</dbReference>
<dbReference type="InterPro" id="IPR006066">
    <property type="entry name" value="NO2/SO3_Rdtase_FeS/sirohaem_BS"/>
</dbReference>
<dbReference type="NCBIfam" id="TIGR02041">
    <property type="entry name" value="CysI"/>
    <property type="match status" value="1"/>
</dbReference>
<dbReference type="NCBIfam" id="NF010029">
    <property type="entry name" value="PRK13504.1"/>
    <property type="match status" value="1"/>
</dbReference>
<dbReference type="PANTHER" id="PTHR11493:SF47">
    <property type="entry name" value="SULFITE REDUCTASE [NADPH] SUBUNIT BETA"/>
    <property type="match status" value="1"/>
</dbReference>
<dbReference type="PANTHER" id="PTHR11493">
    <property type="entry name" value="SULFITE REDUCTASE [NADPH] SUBUNIT BETA-RELATED"/>
    <property type="match status" value="1"/>
</dbReference>
<dbReference type="Pfam" id="PF01077">
    <property type="entry name" value="NIR_SIR"/>
    <property type="match status" value="1"/>
</dbReference>
<dbReference type="Pfam" id="PF03460">
    <property type="entry name" value="NIR_SIR_ferr"/>
    <property type="match status" value="2"/>
</dbReference>
<dbReference type="PRINTS" id="PR00397">
    <property type="entry name" value="SIROHAEM"/>
</dbReference>
<dbReference type="SUPFAM" id="SSF56014">
    <property type="entry name" value="Nitrite and sulphite reductase 4Fe-4S domain-like"/>
    <property type="match status" value="2"/>
</dbReference>
<dbReference type="SUPFAM" id="SSF55124">
    <property type="entry name" value="Nitrite/Sulfite reductase N-terminal domain-like"/>
    <property type="match status" value="2"/>
</dbReference>
<dbReference type="PROSITE" id="PS00365">
    <property type="entry name" value="NIR_SIR"/>
    <property type="match status" value="1"/>
</dbReference>
<evidence type="ECO:0000255" key="1">
    <source>
        <dbReference type="HAMAP-Rule" id="MF_01540"/>
    </source>
</evidence>
<evidence type="ECO:0000256" key="2">
    <source>
        <dbReference type="SAM" id="MobiDB-lite"/>
    </source>
</evidence>
<reference key="1">
    <citation type="submission" date="2008-04" db="EMBL/GenBank/DDBJ databases">
        <title>Complete sequence of chromosome of Methylobacterium populi BJ001.</title>
        <authorList>
            <consortium name="US DOE Joint Genome Institute"/>
            <person name="Copeland A."/>
            <person name="Lucas S."/>
            <person name="Lapidus A."/>
            <person name="Glavina del Rio T."/>
            <person name="Dalin E."/>
            <person name="Tice H."/>
            <person name="Bruce D."/>
            <person name="Goodwin L."/>
            <person name="Pitluck S."/>
            <person name="Chertkov O."/>
            <person name="Brettin T."/>
            <person name="Detter J.C."/>
            <person name="Han C."/>
            <person name="Kuske C.R."/>
            <person name="Schmutz J."/>
            <person name="Larimer F."/>
            <person name="Land M."/>
            <person name="Hauser L."/>
            <person name="Kyrpides N."/>
            <person name="Mikhailova N."/>
            <person name="Marx C."/>
            <person name="Richardson P."/>
        </authorList>
    </citation>
    <scope>NUCLEOTIDE SEQUENCE [LARGE SCALE GENOMIC DNA]</scope>
    <source>
        <strain>ATCC BAA-705 / NCIMB 13946 / BJ001</strain>
    </source>
</reference>
<comment type="function">
    <text evidence="1">Component of the sulfite reductase complex that catalyzes the 6-electron reduction of sulfite to sulfide. This is one of several activities required for the biosynthesis of L-cysteine from sulfate.</text>
</comment>
<comment type="catalytic activity">
    <reaction evidence="1">
        <text>hydrogen sulfide + 3 NADP(+) + 3 H2O = sulfite + 3 NADPH + 4 H(+)</text>
        <dbReference type="Rhea" id="RHEA:13801"/>
        <dbReference type="ChEBI" id="CHEBI:15377"/>
        <dbReference type="ChEBI" id="CHEBI:15378"/>
        <dbReference type="ChEBI" id="CHEBI:17359"/>
        <dbReference type="ChEBI" id="CHEBI:29919"/>
        <dbReference type="ChEBI" id="CHEBI:57783"/>
        <dbReference type="ChEBI" id="CHEBI:58349"/>
        <dbReference type="EC" id="1.8.1.2"/>
    </reaction>
</comment>
<comment type="cofactor">
    <cofactor evidence="1">
        <name>siroheme</name>
        <dbReference type="ChEBI" id="CHEBI:60052"/>
    </cofactor>
    <text evidence="1">Binds 1 siroheme per subunit.</text>
</comment>
<comment type="cofactor">
    <cofactor evidence="1">
        <name>[4Fe-4S] cluster</name>
        <dbReference type="ChEBI" id="CHEBI:49883"/>
    </cofactor>
    <text evidence="1">Binds 1 [4Fe-4S] cluster per subunit.</text>
</comment>
<comment type="pathway">
    <text evidence="1">Sulfur metabolism; hydrogen sulfide biosynthesis; hydrogen sulfide from sulfite (NADPH route): step 1/1.</text>
</comment>
<comment type="subunit">
    <text evidence="1">Alpha(8)-beta(8). The alpha component is a flavoprotein, the beta component is a hemoprotein.</text>
</comment>
<comment type="similarity">
    <text evidence="1">Belongs to the nitrite and sulfite reductase 4Fe-4S domain family.</text>
</comment>
<organism>
    <name type="scientific">Methylorubrum populi (strain ATCC BAA-705 / NCIMB 13946 / BJ001)</name>
    <name type="common">Methylobacterium populi</name>
    <dbReference type="NCBI Taxonomy" id="441620"/>
    <lineage>
        <taxon>Bacteria</taxon>
        <taxon>Pseudomonadati</taxon>
        <taxon>Pseudomonadota</taxon>
        <taxon>Alphaproteobacteria</taxon>
        <taxon>Hyphomicrobiales</taxon>
        <taxon>Methylobacteriaceae</taxon>
        <taxon>Methylorubrum</taxon>
    </lineage>
</organism>